<keyword id="KW-0413">Isomerase</keyword>
<keyword id="KW-1185">Reference proteome</keyword>
<keyword id="KW-0819">tRNA processing</keyword>
<protein>
    <recommendedName>
        <fullName evidence="1">tRNA pseudouridine synthase A</fullName>
        <ecNumber evidence="1">5.4.99.12</ecNumber>
    </recommendedName>
    <alternativeName>
        <fullName evidence="1">tRNA pseudouridine(38-40) synthase</fullName>
    </alternativeName>
    <alternativeName>
        <fullName evidence="1">tRNA pseudouridylate synthase I</fullName>
    </alternativeName>
    <alternativeName>
        <fullName evidence="1">tRNA-uridine isomerase I</fullName>
    </alternativeName>
</protein>
<gene>
    <name evidence="1" type="primary">truA</name>
    <name type="ordered locus">Swol_2299</name>
</gene>
<evidence type="ECO:0000255" key="1">
    <source>
        <dbReference type="HAMAP-Rule" id="MF_00171"/>
    </source>
</evidence>
<comment type="function">
    <text evidence="1">Formation of pseudouridine at positions 38, 39 and 40 in the anticodon stem and loop of transfer RNAs.</text>
</comment>
<comment type="catalytic activity">
    <reaction evidence="1">
        <text>uridine(38/39/40) in tRNA = pseudouridine(38/39/40) in tRNA</text>
        <dbReference type="Rhea" id="RHEA:22376"/>
        <dbReference type="Rhea" id="RHEA-COMP:10085"/>
        <dbReference type="Rhea" id="RHEA-COMP:10087"/>
        <dbReference type="ChEBI" id="CHEBI:65314"/>
        <dbReference type="ChEBI" id="CHEBI:65315"/>
        <dbReference type="EC" id="5.4.99.12"/>
    </reaction>
</comment>
<comment type="subunit">
    <text evidence="1">Homodimer.</text>
</comment>
<comment type="similarity">
    <text evidence="1">Belongs to the tRNA pseudouridine synthase TruA family.</text>
</comment>
<name>TRUA_SYNWW</name>
<feature type="chain" id="PRO_1000017204" description="tRNA pseudouridine synthase A">
    <location>
        <begin position="1"/>
        <end position="249"/>
    </location>
</feature>
<feature type="active site" description="Nucleophile" evidence="1">
    <location>
        <position position="52"/>
    </location>
</feature>
<feature type="binding site" evidence="1">
    <location>
        <position position="110"/>
    </location>
    <ligand>
        <name>substrate</name>
    </ligand>
</feature>
<sequence length="249" mass="28223">MSRIKLLLEYDGSNYHGFQLQKNANTVQAELEKAIYRLSGERATIVCAGRTDAGVHAWGQVVAFDSCSTIPGDRWAYALNSQLPEDIQVLESQETRAEFNPRFDALKKCYGYLIYRQKKKATFYRHYALCNTEPLKLEAMQEAAEILKGRQNFRSFCASGSSARTFEREIFHCRLSEKGPCLLLHIAADGFLYNMVRIITGTLLEVGKGKYPPQHLREIIASQDRTRAGPTAPPQGLYLLQVFYPEDSK</sequence>
<organism>
    <name type="scientific">Syntrophomonas wolfei subsp. wolfei (strain DSM 2245B / Goettingen)</name>
    <dbReference type="NCBI Taxonomy" id="335541"/>
    <lineage>
        <taxon>Bacteria</taxon>
        <taxon>Bacillati</taxon>
        <taxon>Bacillota</taxon>
        <taxon>Clostridia</taxon>
        <taxon>Eubacteriales</taxon>
        <taxon>Syntrophomonadaceae</taxon>
        <taxon>Syntrophomonas</taxon>
    </lineage>
</organism>
<dbReference type="EC" id="5.4.99.12" evidence="1"/>
<dbReference type="EMBL" id="CP000448">
    <property type="protein sequence ID" value="ABI69590.1"/>
    <property type="molecule type" value="Genomic_DNA"/>
</dbReference>
<dbReference type="RefSeq" id="WP_011641674.1">
    <property type="nucleotide sequence ID" value="NC_008346.1"/>
</dbReference>
<dbReference type="SMR" id="Q0AUL4"/>
<dbReference type="STRING" id="335541.Swol_2299"/>
<dbReference type="KEGG" id="swo:Swol_2299"/>
<dbReference type="eggNOG" id="COG0101">
    <property type="taxonomic scope" value="Bacteria"/>
</dbReference>
<dbReference type="HOGENOM" id="CLU_014673_0_1_9"/>
<dbReference type="OrthoDB" id="9811823at2"/>
<dbReference type="Proteomes" id="UP000001968">
    <property type="component" value="Chromosome"/>
</dbReference>
<dbReference type="GO" id="GO:0003723">
    <property type="term" value="F:RNA binding"/>
    <property type="evidence" value="ECO:0007669"/>
    <property type="project" value="InterPro"/>
</dbReference>
<dbReference type="GO" id="GO:0160147">
    <property type="term" value="F:tRNA pseudouridine(38-40) synthase activity"/>
    <property type="evidence" value="ECO:0007669"/>
    <property type="project" value="UniProtKB-EC"/>
</dbReference>
<dbReference type="GO" id="GO:0031119">
    <property type="term" value="P:tRNA pseudouridine synthesis"/>
    <property type="evidence" value="ECO:0007669"/>
    <property type="project" value="UniProtKB-UniRule"/>
</dbReference>
<dbReference type="CDD" id="cd02570">
    <property type="entry name" value="PseudoU_synth_EcTruA"/>
    <property type="match status" value="1"/>
</dbReference>
<dbReference type="FunFam" id="3.30.70.580:FF:000001">
    <property type="entry name" value="tRNA pseudouridine synthase A"/>
    <property type="match status" value="1"/>
</dbReference>
<dbReference type="Gene3D" id="3.30.70.660">
    <property type="entry name" value="Pseudouridine synthase I, catalytic domain, C-terminal subdomain"/>
    <property type="match status" value="1"/>
</dbReference>
<dbReference type="Gene3D" id="3.30.70.580">
    <property type="entry name" value="Pseudouridine synthase I, catalytic domain, N-terminal subdomain"/>
    <property type="match status" value="1"/>
</dbReference>
<dbReference type="HAMAP" id="MF_00171">
    <property type="entry name" value="TruA"/>
    <property type="match status" value="1"/>
</dbReference>
<dbReference type="InterPro" id="IPR020103">
    <property type="entry name" value="PsdUridine_synth_cat_dom_sf"/>
</dbReference>
<dbReference type="InterPro" id="IPR001406">
    <property type="entry name" value="PsdUridine_synth_TruA"/>
</dbReference>
<dbReference type="InterPro" id="IPR020097">
    <property type="entry name" value="PsdUridine_synth_TruA_a/b_dom"/>
</dbReference>
<dbReference type="InterPro" id="IPR020095">
    <property type="entry name" value="PsdUridine_synth_TruA_C"/>
</dbReference>
<dbReference type="InterPro" id="IPR020094">
    <property type="entry name" value="TruA/RsuA/RluB/E/F_N"/>
</dbReference>
<dbReference type="NCBIfam" id="TIGR00071">
    <property type="entry name" value="hisT_truA"/>
    <property type="match status" value="1"/>
</dbReference>
<dbReference type="PANTHER" id="PTHR11142">
    <property type="entry name" value="PSEUDOURIDYLATE SYNTHASE"/>
    <property type="match status" value="1"/>
</dbReference>
<dbReference type="PANTHER" id="PTHR11142:SF0">
    <property type="entry name" value="TRNA PSEUDOURIDINE SYNTHASE-LIKE 1"/>
    <property type="match status" value="1"/>
</dbReference>
<dbReference type="Pfam" id="PF01416">
    <property type="entry name" value="PseudoU_synth_1"/>
    <property type="match status" value="2"/>
</dbReference>
<dbReference type="PIRSF" id="PIRSF001430">
    <property type="entry name" value="tRNA_psdUrid_synth"/>
    <property type="match status" value="1"/>
</dbReference>
<dbReference type="SUPFAM" id="SSF55120">
    <property type="entry name" value="Pseudouridine synthase"/>
    <property type="match status" value="1"/>
</dbReference>
<accession>Q0AUL4</accession>
<reference key="1">
    <citation type="journal article" date="2010" name="Environ. Microbiol.">
        <title>The genome of Syntrophomonas wolfei: new insights into syntrophic metabolism and biohydrogen production.</title>
        <authorList>
            <person name="Sieber J.R."/>
            <person name="Sims D.R."/>
            <person name="Han C."/>
            <person name="Kim E."/>
            <person name="Lykidis A."/>
            <person name="Lapidus A.L."/>
            <person name="McDonnald E."/>
            <person name="Rohlin L."/>
            <person name="Culley D.E."/>
            <person name="Gunsalus R."/>
            <person name="McInerney M.J."/>
        </authorList>
    </citation>
    <scope>NUCLEOTIDE SEQUENCE [LARGE SCALE GENOMIC DNA]</scope>
    <source>
        <strain>DSM 2245B / Goettingen</strain>
    </source>
</reference>
<proteinExistence type="inferred from homology"/>